<gene>
    <name evidence="1" type="primary">nuoH</name>
    <name type="ordered locus">AHA_1776</name>
</gene>
<comment type="function">
    <text evidence="1">NDH-1 shuttles electrons from NADH, via FMN and iron-sulfur (Fe-S) centers, to quinones in the respiratory chain. The immediate electron acceptor for the enzyme in this species is believed to be ubiquinone. Couples the redox reaction to proton translocation (for every two electrons transferred, four hydrogen ions are translocated across the cytoplasmic membrane), and thus conserves the redox energy in a proton gradient. This subunit may bind ubiquinone.</text>
</comment>
<comment type="catalytic activity">
    <reaction evidence="1">
        <text>a quinone + NADH + 5 H(+)(in) = a quinol + NAD(+) + 4 H(+)(out)</text>
        <dbReference type="Rhea" id="RHEA:57888"/>
        <dbReference type="ChEBI" id="CHEBI:15378"/>
        <dbReference type="ChEBI" id="CHEBI:24646"/>
        <dbReference type="ChEBI" id="CHEBI:57540"/>
        <dbReference type="ChEBI" id="CHEBI:57945"/>
        <dbReference type="ChEBI" id="CHEBI:132124"/>
    </reaction>
</comment>
<comment type="subunit">
    <text evidence="1">NDH-1 is composed of 14 different subunits. Subunits NuoA, H, J, K, L, M, N constitute the membrane sector of the complex.</text>
</comment>
<comment type="subcellular location">
    <subcellularLocation>
        <location evidence="1">Cell inner membrane</location>
        <topology evidence="1">Multi-pass membrane protein</topology>
    </subcellularLocation>
</comment>
<comment type="similarity">
    <text evidence="1">Belongs to the complex I subunit 1 family.</text>
</comment>
<name>NUOH_AERHH</name>
<evidence type="ECO:0000255" key="1">
    <source>
        <dbReference type="HAMAP-Rule" id="MF_01350"/>
    </source>
</evidence>
<feature type="chain" id="PRO_0000298789" description="NADH-quinone oxidoreductase subunit H">
    <location>
        <begin position="1"/>
        <end position="322"/>
    </location>
</feature>
<feature type="transmembrane region" description="Helical" evidence="1">
    <location>
        <begin position="12"/>
        <end position="32"/>
    </location>
</feature>
<feature type="transmembrane region" description="Helical" evidence="1">
    <location>
        <begin position="79"/>
        <end position="99"/>
    </location>
</feature>
<feature type="transmembrane region" description="Helical" evidence="1">
    <location>
        <begin position="111"/>
        <end position="131"/>
    </location>
</feature>
<feature type="transmembrane region" description="Helical" evidence="1">
    <location>
        <begin position="151"/>
        <end position="171"/>
    </location>
</feature>
<feature type="transmembrane region" description="Helical" evidence="1">
    <location>
        <begin position="183"/>
        <end position="203"/>
    </location>
</feature>
<feature type="transmembrane region" description="Helical" evidence="1">
    <location>
        <begin position="234"/>
        <end position="254"/>
    </location>
</feature>
<feature type="transmembrane region" description="Helical" evidence="1">
    <location>
        <begin position="262"/>
        <end position="282"/>
    </location>
</feature>
<feature type="transmembrane region" description="Helical" evidence="1">
    <location>
        <begin position="301"/>
        <end position="321"/>
    </location>
</feature>
<dbReference type="EC" id="7.1.1.-" evidence="1"/>
<dbReference type="EMBL" id="CP000462">
    <property type="protein sequence ID" value="ABK35839.1"/>
    <property type="molecule type" value="Genomic_DNA"/>
</dbReference>
<dbReference type="RefSeq" id="WP_011705661.1">
    <property type="nucleotide sequence ID" value="NC_008570.1"/>
</dbReference>
<dbReference type="RefSeq" id="YP_856312.1">
    <property type="nucleotide sequence ID" value="NC_008570.1"/>
</dbReference>
<dbReference type="SMR" id="A0KJ61"/>
<dbReference type="STRING" id="380703.AHA_1776"/>
<dbReference type="EnsemblBacteria" id="ABK35839">
    <property type="protein sequence ID" value="ABK35839"/>
    <property type="gene ID" value="AHA_1776"/>
</dbReference>
<dbReference type="GeneID" id="4486794"/>
<dbReference type="KEGG" id="aha:AHA_1776"/>
<dbReference type="PATRIC" id="fig|380703.7.peg.1792"/>
<dbReference type="eggNOG" id="COG1005">
    <property type="taxonomic scope" value="Bacteria"/>
</dbReference>
<dbReference type="HOGENOM" id="CLU_015134_0_1_6"/>
<dbReference type="OrthoDB" id="9803734at2"/>
<dbReference type="Proteomes" id="UP000000756">
    <property type="component" value="Chromosome"/>
</dbReference>
<dbReference type="GO" id="GO:0005886">
    <property type="term" value="C:plasma membrane"/>
    <property type="evidence" value="ECO:0007669"/>
    <property type="project" value="UniProtKB-SubCell"/>
</dbReference>
<dbReference type="GO" id="GO:0003954">
    <property type="term" value="F:NADH dehydrogenase activity"/>
    <property type="evidence" value="ECO:0007669"/>
    <property type="project" value="TreeGrafter"/>
</dbReference>
<dbReference type="GO" id="GO:0016655">
    <property type="term" value="F:oxidoreductase activity, acting on NAD(P)H, quinone or similar compound as acceptor"/>
    <property type="evidence" value="ECO:0007669"/>
    <property type="project" value="UniProtKB-UniRule"/>
</dbReference>
<dbReference type="GO" id="GO:0048038">
    <property type="term" value="F:quinone binding"/>
    <property type="evidence" value="ECO:0007669"/>
    <property type="project" value="UniProtKB-KW"/>
</dbReference>
<dbReference type="GO" id="GO:0009060">
    <property type="term" value="P:aerobic respiration"/>
    <property type="evidence" value="ECO:0007669"/>
    <property type="project" value="TreeGrafter"/>
</dbReference>
<dbReference type="HAMAP" id="MF_01350">
    <property type="entry name" value="NDH1_NuoH"/>
    <property type="match status" value="1"/>
</dbReference>
<dbReference type="InterPro" id="IPR001694">
    <property type="entry name" value="NADH_UbQ_OxRdtase_su1/FPO"/>
</dbReference>
<dbReference type="InterPro" id="IPR018086">
    <property type="entry name" value="NADH_UbQ_OxRdtase_su1_CS"/>
</dbReference>
<dbReference type="NCBIfam" id="NF004740">
    <property type="entry name" value="PRK06076.1-1"/>
    <property type="match status" value="1"/>
</dbReference>
<dbReference type="NCBIfam" id="NF004741">
    <property type="entry name" value="PRK06076.1-2"/>
    <property type="match status" value="1"/>
</dbReference>
<dbReference type="PANTHER" id="PTHR11432">
    <property type="entry name" value="NADH DEHYDROGENASE SUBUNIT 1"/>
    <property type="match status" value="1"/>
</dbReference>
<dbReference type="PANTHER" id="PTHR11432:SF3">
    <property type="entry name" value="NADH-UBIQUINONE OXIDOREDUCTASE CHAIN 1"/>
    <property type="match status" value="1"/>
</dbReference>
<dbReference type="Pfam" id="PF00146">
    <property type="entry name" value="NADHdh"/>
    <property type="match status" value="1"/>
</dbReference>
<dbReference type="PROSITE" id="PS00667">
    <property type="entry name" value="COMPLEX1_ND1_1"/>
    <property type="match status" value="1"/>
</dbReference>
<dbReference type="PROSITE" id="PS00668">
    <property type="entry name" value="COMPLEX1_ND1_2"/>
    <property type="match status" value="1"/>
</dbReference>
<sequence length="322" mass="35691">MSDSLIDLLLEIGKALIVLVGIVGAGAFMSFIERRLLALWQDRYGPNRVGPFGLLQLAADMIKMFFKEDWIPPFADRRIFVLAPIIAFTAFILAFAVVPITPTWGVADLNVGLLYILAIAGLAVYAVLFAGWSSNNKYSLLGSLRASAQTLSYEVFLGLSLMGIVIQTGSFNLRDIVEAQAGLWNVIPQILGFITFLFAGVAVTHRHPFDQPEAEQELADGYHIEYAGMKWGLFFVGEYIGIVLISSLIVTLFFGGWHGPWLPPFIWFALKTACFMVFFILLRASLPRPRFDQVMSFGWKVCLPLTLLNMLVTGAVVLMNAQ</sequence>
<proteinExistence type="inferred from homology"/>
<accession>A0KJ61</accession>
<reference key="1">
    <citation type="journal article" date="2006" name="J. Bacteriol.">
        <title>Genome sequence of Aeromonas hydrophila ATCC 7966T: jack of all trades.</title>
        <authorList>
            <person name="Seshadri R."/>
            <person name="Joseph S.W."/>
            <person name="Chopra A.K."/>
            <person name="Sha J."/>
            <person name="Shaw J."/>
            <person name="Graf J."/>
            <person name="Haft D.H."/>
            <person name="Wu M."/>
            <person name="Ren Q."/>
            <person name="Rosovitz M.J."/>
            <person name="Madupu R."/>
            <person name="Tallon L."/>
            <person name="Kim M."/>
            <person name="Jin S."/>
            <person name="Vuong H."/>
            <person name="Stine O.C."/>
            <person name="Ali A."/>
            <person name="Horneman A.J."/>
            <person name="Heidelberg J.F."/>
        </authorList>
    </citation>
    <scope>NUCLEOTIDE SEQUENCE [LARGE SCALE GENOMIC DNA]</scope>
    <source>
        <strain>ATCC 7966 / DSM 30187 / BCRC 13018 / CCUG 14551 / JCM 1027 / KCTC 2358 / NCIMB 9240 / NCTC 8049</strain>
    </source>
</reference>
<organism>
    <name type="scientific">Aeromonas hydrophila subsp. hydrophila (strain ATCC 7966 / DSM 30187 / BCRC 13018 / CCUG 14551 / JCM 1027 / KCTC 2358 / NCIMB 9240 / NCTC 8049)</name>
    <dbReference type="NCBI Taxonomy" id="380703"/>
    <lineage>
        <taxon>Bacteria</taxon>
        <taxon>Pseudomonadati</taxon>
        <taxon>Pseudomonadota</taxon>
        <taxon>Gammaproteobacteria</taxon>
        <taxon>Aeromonadales</taxon>
        <taxon>Aeromonadaceae</taxon>
        <taxon>Aeromonas</taxon>
    </lineage>
</organism>
<keyword id="KW-0997">Cell inner membrane</keyword>
<keyword id="KW-1003">Cell membrane</keyword>
<keyword id="KW-0472">Membrane</keyword>
<keyword id="KW-0520">NAD</keyword>
<keyword id="KW-0874">Quinone</keyword>
<keyword id="KW-1185">Reference proteome</keyword>
<keyword id="KW-1278">Translocase</keyword>
<keyword id="KW-0812">Transmembrane</keyword>
<keyword id="KW-1133">Transmembrane helix</keyword>
<keyword id="KW-0830">Ubiquinone</keyword>
<protein>
    <recommendedName>
        <fullName evidence="1">NADH-quinone oxidoreductase subunit H</fullName>
        <ecNumber evidence="1">7.1.1.-</ecNumber>
    </recommendedName>
    <alternativeName>
        <fullName evidence="1">NADH dehydrogenase I subunit H</fullName>
    </alternativeName>
    <alternativeName>
        <fullName evidence="1">NDH-1 subunit H</fullName>
    </alternativeName>
</protein>